<proteinExistence type="evidence at protein level"/>
<keyword id="KW-0009">Actin-binding</keyword>
<keyword id="KW-0966">Cell projection</keyword>
<keyword id="KW-0133">Cell shape</keyword>
<keyword id="KW-0963">Cytoplasm</keyword>
<keyword id="KW-0217">Developmental protein</keyword>
<keyword id="KW-0221">Differentiation</keyword>
<keyword id="KW-0903">Direct protein sequencing</keyword>
<keyword id="KW-0524">Neurogenesis</keyword>
<keyword id="KW-1185">Reference proteome</keyword>
<keyword id="KW-0770">Synapse</keyword>
<keyword id="KW-0771">Synaptosome</keyword>
<organism>
    <name type="scientific">Bos taurus</name>
    <name type="common">Bovine</name>
    <dbReference type="NCBI Taxonomy" id="9913"/>
    <lineage>
        <taxon>Eukaryota</taxon>
        <taxon>Metazoa</taxon>
        <taxon>Chordata</taxon>
        <taxon>Craniata</taxon>
        <taxon>Vertebrata</taxon>
        <taxon>Euteleostomi</taxon>
        <taxon>Mammalia</taxon>
        <taxon>Eutheria</taxon>
        <taxon>Laurasiatheria</taxon>
        <taxon>Artiodactyla</taxon>
        <taxon>Ruminantia</taxon>
        <taxon>Pecora</taxon>
        <taxon>Bovidae</taxon>
        <taxon>Bovinae</taxon>
        <taxon>Bos</taxon>
    </lineage>
</organism>
<feature type="chain" id="PRO_0000279705" description="Cytoplasmic FMR1-interacting protein 1">
    <location>
        <begin position="1" status="less than"/>
        <end position="51" status="greater than"/>
    </location>
</feature>
<feature type="non-consecutive residues" evidence="5">
    <location>
        <begin position="8"/>
        <end position="9"/>
    </location>
</feature>
<feature type="non-consecutive residues" evidence="5">
    <location>
        <begin position="14"/>
        <end position="15"/>
    </location>
</feature>
<feature type="non-consecutive residues" evidence="5">
    <location>
        <begin position="20"/>
        <end position="21"/>
    </location>
</feature>
<feature type="non-consecutive residues" evidence="5">
    <location>
        <begin position="30"/>
        <end position="31"/>
    </location>
</feature>
<feature type="non-consecutive residues" evidence="5">
    <location>
        <begin position="34"/>
        <end position="35"/>
    </location>
</feature>
<feature type="non-consecutive residues" evidence="5">
    <location>
        <begin position="47"/>
        <end position="48"/>
    </location>
</feature>
<feature type="non-terminal residue" evidence="5">
    <location>
        <position position="1"/>
    </location>
</feature>
<feature type="non-terminal residue" evidence="5">
    <location>
        <position position="51"/>
    </location>
</feature>
<reference evidence="6" key="1">
    <citation type="journal article" date="1998" name="J. Biol. Chem.">
        <title>p140Sra-1 (specifically Rac1-associated protein) is a novel specific target for Rac1 small GTPase.</title>
        <authorList>
            <person name="Kobayashi K."/>
            <person name="Kuroda S."/>
            <person name="Fukata M."/>
            <person name="Nakamura T."/>
            <person name="Nagase T."/>
            <person name="Nomura N."/>
            <person name="Matsuura Y."/>
            <person name="Yoshida-Kubomura N."/>
            <person name="Iwamatsu A."/>
            <person name="Kaibuchi K."/>
        </authorList>
    </citation>
    <scope>PROTEIN SEQUENCE</scope>
    <scope>INTERACTION WITH RAC1</scope>
    <source>
        <tissue evidence="4">Brain</tissue>
    </source>
</reference>
<comment type="function">
    <text evidence="1 2">Component of the CYFIP1-EIF4E-FMR1 complex which binds to the mRNA cap and mediates translational repression. In the CYFIP1-EIF4E-FMR1 complex this subunit is an adapter between EIF4E and FMR1. Promotes the translation repression activity of FMR1 in brain probably by mediating its association with EIF4E and mRNA (By similarity). Regulates formation of membrane ruffles and lamellipodia. Plays a role in axon outgrowth. Binds to F-actin but not to RNA. Part of the WAVE complex that regulates actin filament reorganization via its interaction with the Arp2/3 complex. Actin remodeling activity is regulated by RAC1. Regulator of epithelial morphogenesis (By similarity). As component of the WAVE1 complex, required for BDNF-NTRK2 endocytic trafficking and signaling from early endosomes (By similarity).</text>
</comment>
<comment type="subunit">
    <text evidence="1 2">Component of the WAVE1 complex composed of ABI2, CYFIP1 or CYFIP2, BRK1, NCKAP1 and WASF1/WAVE1. Within the complex, a heterodimer containing NCKAP1 and CYFIP1 interacts with a heterotrimer formed by WAVE1, ABI2 and BRK1. Component of the CYFIP1-EIF4E-FMR1 complex which is composed of CYFIP, EIF4E and FMR1. Interacts with FMR1 but does not bind to related proteins FXR1 or FXR2. Interaction with EIF4E stimulates FMR1 binding. Component of the WAVE2 complex composed of ABI1, CYFIP1/SRA1, NCKAP1/NAP1 (NCKAP1l/HEM1 in hematopoietic cells) and WASF2/WAVE2. Interacts with the active GTP-bound form of RAC1. Interacts through its C-terminus with the C-terminus of DPYSL2/CRMP2 which is necessary for DPYSL2-induced axon outgrowth. Interacts with NYAP1, NYAP2 and MYO16. Interacts with TMEM108 (via N-terminus); the interaction associates TMEM108 with the WAVE1 complex (By similarity).</text>
</comment>
<comment type="subcellular location">
    <subcellularLocation>
        <location evidence="2">Cytoplasm</location>
    </subcellularLocation>
    <subcellularLocation>
        <location evidence="2">Cytoplasm</location>
        <location evidence="2">Perinuclear region</location>
    </subcellularLocation>
    <subcellularLocation>
        <location evidence="2">Cell projection</location>
        <location evidence="2">Lamellipodium</location>
    </subcellularLocation>
    <subcellularLocation>
        <location evidence="2">Cell projection</location>
        <location evidence="2">Ruffle</location>
    </subcellularLocation>
    <subcellularLocation>
        <location evidence="2">Synapse</location>
        <location evidence="2">Synaptosome</location>
    </subcellularLocation>
    <text evidence="2">Highly expressed in the perinuclear region (By similarity). Enriched in synaptosomes (By similarity). Also enriched in membrane ruffles and at the tips of lamellipodia (By similarity).</text>
</comment>
<comment type="similarity">
    <text evidence="3">Belongs to the CYFIP family.</text>
</comment>
<accession>P85091</accession>
<gene>
    <name evidence="2" type="primary">CYFIP1</name>
</gene>
<protein>
    <recommendedName>
        <fullName>Cytoplasmic FMR1-interacting protein 1</fullName>
    </recommendedName>
    <alternativeName>
        <fullName>Specifically Rac1-associated protein 1</fullName>
        <shortName>Sra-1</shortName>
    </alternativeName>
    <alternativeName>
        <fullName>p140sra-1</fullName>
    </alternativeName>
</protein>
<dbReference type="SMR" id="P85091"/>
<dbReference type="CORUM" id="P85091"/>
<dbReference type="FunCoup" id="P85091">
    <property type="interactions" value="4"/>
</dbReference>
<dbReference type="InParanoid" id="P85091"/>
<dbReference type="OrthoDB" id="10265867at2759"/>
<dbReference type="Proteomes" id="UP000009136">
    <property type="component" value="Unplaced"/>
</dbReference>
<dbReference type="GO" id="GO:0030027">
    <property type="term" value="C:lamellipodium"/>
    <property type="evidence" value="ECO:0000250"/>
    <property type="project" value="UniProtKB"/>
</dbReference>
<dbReference type="GO" id="GO:0043005">
    <property type="term" value="C:neuron projection"/>
    <property type="evidence" value="ECO:0000250"/>
    <property type="project" value="UniProtKB"/>
</dbReference>
<dbReference type="GO" id="GO:0048471">
    <property type="term" value="C:perinuclear region of cytoplasm"/>
    <property type="evidence" value="ECO:0000250"/>
    <property type="project" value="UniProtKB"/>
</dbReference>
<dbReference type="GO" id="GO:0001726">
    <property type="term" value="C:ruffle"/>
    <property type="evidence" value="ECO:0000314"/>
    <property type="project" value="UniProtKB"/>
</dbReference>
<dbReference type="GO" id="GO:0045202">
    <property type="term" value="C:synapse"/>
    <property type="evidence" value="ECO:0007669"/>
    <property type="project" value="UniProtKB-SubCell"/>
</dbReference>
<dbReference type="GO" id="GO:0051015">
    <property type="term" value="F:actin filament binding"/>
    <property type="evidence" value="ECO:0000314"/>
    <property type="project" value="UniProtKB"/>
</dbReference>
<dbReference type="GO" id="GO:0031267">
    <property type="term" value="F:small GTPase binding"/>
    <property type="evidence" value="ECO:0000314"/>
    <property type="project" value="UniProtKB"/>
</dbReference>
<dbReference type="GO" id="GO:0030371">
    <property type="term" value="F:translation repressor activity"/>
    <property type="evidence" value="ECO:0000250"/>
    <property type="project" value="UniProtKB"/>
</dbReference>
<dbReference type="GO" id="GO:0048675">
    <property type="term" value="P:axon extension"/>
    <property type="evidence" value="ECO:0000250"/>
    <property type="project" value="UniProtKB"/>
</dbReference>
<dbReference type="GO" id="GO:0030032">
    <property type="term" value="P:lamellipodium assembly"/>
    <property type="evidence" value="ECO:0000250"/>
    <property type="project" value="UniProtKB"/>
</dbReference>
<dbReference type="GO" id="GO:0008360">
    <property type="term" value="P:regulation of cell shape"/>
    <property type="evidence" value="ECO:0007669"/>
    <property type="project" value="UniProtKB-KW"/>
</dbReference>
<dbReference type="GO" id="GO:0031529">
    <property type="term" value="P:ruffle organization"/>
    <property type="evidence" value="ECO:0000314"/>
    <property type="project" value="UniProtKB"/>
</dbReference>
<name>CYFP1_BOVIN</name>
<sequence length="51" mass="6047">MYLTPSEKRINLSKVHPTDKLADQIFAYYKEGERDGKDEIIKNVPLKRIRK</sequence>
<evidence type="ECO:0000250" key="1">
    <source>
        <dbReference type="UniProtKB" id="Q7L576"/>
    </source>
</evidence>
<evidence type="ECO:0000250" key="2">
    <source>
        <dbReference type="UniProtKB" id="Q7TMB8"/>
    </source>
</evidence>
<evidence type="ECO:0000255" key="3"/>
<evidence type="ECO:0000269" key="4">
    <source>
    </source>
</evidence>
<evidence type="ECO:0000303" key="5">
    <source>
    </source>
</evidence>
<evidence type="ECO:0000305" key="6"/>